<organism>
    <name type="scientific">Escherichia coli O127:H6 (strain E2348/69 / EPEC)</name>
    <dbReference type="NCBI Taxonomy" id="574521"/>
    <lineage>
        <taxon>Bacteria</taxon>
        <taxon>Pseudomonadati</taxon>
        <taxon>Pseudomonadota</taxon>
        <taxon>Gammaproteobacteria</taxon>
        <taxon>Enterobacterales</taxon>
        <taxon>Enterobacteriaceae</taxon>
        <taxon>Escherichia</taxon>
    </lineage>
</organism>
<accession>B7UKF2</accession>
<reference key="1">
    <citation type="journal article" date="2009" name="J. Bacteriol.">
        <title>Complete genome sequence and comparative genome analysis of enteropathogenic Escherichia coli O127:H6 strain E2348/69.</title>
        <authorList>
            <person name="Iguchi A."/>
            <person name="Thomson N.R."/>
            <person name="Ogura Y."/>
            <person name="Saunders D."/>
            <person name="Ooka T."/>
            <person name="Henderson I.R."/>
            <person name="Harris D."/>
            <person name="Asadulghani M."/>
            <person name="Kurokawa K."/>
            <person name="Dean P."/>
            <person name="Kenny B."/>
            <person name="Quail M.A."/>
            <person name="Thurston S."/>
            <person name="Dougan G."/>
            <person name="Hayashi T."/>
            <person name="Parkhill J."/>
            <person name="Frankel G."/>
        </authorList>
    </citation>
    <scope>NUCLEOTIDE SEQUENCE [LARGE SCALE GENOMIC DNA]</scope>
    <source>
        <strain>E2348/69 / EPEC</strain>
    </source>
</reference>
<dbReference type="EMBL" id="FM180568">
    <property type="protein sequence ID" value="CAS07955.1"/>
    <property type="molecule type" value="Genomic_DNA"/>
</dbReference>
<dbReference type="RefSeq" id="WP_001195025.1">
    <property type="nucleotide sequence ID" value="NC_011601.1"/>
</dbReference>
<dbReference type="SMR" id="B7UKF2"/>
<dbReference type="GeneID" id="93776978"/>
<dbReference type="KEGG" id="ecg:E2348C_0407"/>
<dbReference type="HOGENOM" id="CLU_060739_1_2_6"/>
<dbReference type="Proteomes" id="UP000008205">
    <property type="component" value="Chromosome"/>
</dbReference>
<dbReference type="GO" id="GO:0003677">
    <property type="term" value="F:DNA binding"/>
    <property type="evidence" value="ECO:0007669"/>
    <property type="project" value="UniProtKB-UniRule"/>
</dbReference>
<dbReference type="GO" id="GO:0008270">
    <property type="term" value="F:zinc ion binding"/>
    <property type="evidence" value="ECO:0007669"/>
    <property type="project" value="UniProtKB-KW"/>
</dbReference>
<dbReference type="GO" id="GO:0006310">
    <property type="term" value="P:DNA recombination"/>
    <property type="evidence" value="ECO:0007669"/>
    <property type="project" value="UniProtKB-UniRule"/>
</dbReference>
<dbReference type="GO" id="GO:0006281">
    <property type="term" value="P:DNA repair"/>
    <property type="evidence" value="ECO:0007669"/>
    <property type="project" value="UniProtKB-UniRule"/>
</dbReference>
<dbReference type="CDD" id="cd01025">
    <property type="entry name" value="TOPRIM_recR"/>
    <property type="match status" value="1"/>
</dbReference>
<dbReference type="FunFam" id="1.10.8.420:FF:000001">
    <property type="entry name" value="Recombination protein RecR"/>
    <property type="match status" value="1"/>
</dbReference>
<dbReference type="FunFam" id="3.40.1360.10:FF:000001">
    <property type="entry name" value="Recombination protein RecR"/>
    <property type="match status" value="1"/>
</dbReference>
<dbReference type="Gene3D" id="3.40.1360.10">
    <property type="match status" value="1"/>
</dbReference>
<dbReference type="Gene3D" id="6.10.250.240">
    <property type="match status" value="1"/>
</dbReference>
<dbReference type="Gene3D" id="1.10.8.420">
    <property type="entry name" value="RecR Domain 1"/>
    <property type="match status" value="1"/>
</dbReference>
<dbReference type="HAMAP" id="MF_00017">
    <property type="entry name" value="RecR"/>
    <property type="match status" value="1"/>
</dbReference>
<dbReference type="InterPro" id="IPR000093">
    <property type="entry name" value="DNA_Rcmb_RecR"/>
</dbReference>
<dbReference type="InterPro" id="IPR023627">
    <property type="entry name" value="Rcmb_RecR"/>
</dbReference>
<dbReference type="InterPro" id="IPR015967">
    <property type="entry name" value="Rcmb_RecR_Znf"/>
</dbReference>
<dbReference type="InterPro" id="IPR006171">
    <property type="entry name" value="TOPRIM_dom"/>
</dbReference>
<dbReference type="InterPro" id="IPR034137">
    <property type="entry name" value="TOPRIM_RecR"/>
</dbReference>
<dbReference type="NCBIfam" id="TIGR00615">
    <property type="entry name" value="recR"/>
    <property type="match status" value="1"/>
</dbReference>
<dbReference type="PANTHER" id="PTHR30446">
    <property type="entry name" value="RECOMBINATION PROTEIN RECR"/>
    <property type="match status" value="1"/>
</dbReference>
<dbReference type="PANTHER" id="PTHR30446:SF0">
    <property type="entry name" value="RECOMBINATION PROTEIN RECR"/>
    <property type="match status" value="1"/>
</dbReference>
<dbReference type="Pfam" id="PF21175">
    <property type="entry name" value="RecR_C"/>
    <property type="match status" value="1"/>
</dbReference>
<dbReference type="Pfam" id="PF21176">
    <property type="entry name" value="RecR_HhH"/>
    <property type="match status" value="1"/>
</dbReference>
<dbReference type="Pfam" id="PF02132">
    <property type="entry name" value="RecR_ZnF"/>
    <property type="match status" value="1"/>
</dbReference>
<dbReference type="Pfam" id="PF13662">
    <property type="entry name" value="Toprim_4"/>
    <property type="match status" value="1"/>
</dbReference>
<dbReference type="SMART" id="SM00493">
    <property type="entry name" value="TOPRIM"/>
    <property type="match status" value="1"/>
</dbReference>
<dbReference type="SUPFAM" id="SSF111304">
    <property type="entry name" value="Recombination protein RecR"/>
    <property type="match status" value="1"/>
</dbReference>
<dbReference type="PROSITE" id="PS01300">
    <property type="entry name" value="RECR"/>
    <property type="match status" value="1"/>
</dbReference>
<dbReference type="PROSITE" id="PS50880">
    <property type="entry name" value="TOPRIM"/>
    <property type="match status" value="1"/>
</dbReference>
<protein>
    <recommendedName>
        <fullName evidence="1">Recombination protein RecR</fullName>
    </recommendedName>
</protein>
<keyword id="KW-0227">DNA damage</keyword>
<keyword id="KW-0233">DNA recombination</keyword>
<keyword id="KW-0234">DNA repair</keyword>
<keyword id="KW-0479">Metal-binding</keyword>
<keyword id="KW-1185">Reference proteome</keyword>
<keyword id="KW-0862">Zinc</keyword>
<keyword id="KW-0863">Zinc-finger</keyword>
<evidence type="ECO:0000255" key="1">
    <source>
        <dbReference type="HAMAP-Rule" id="MF_00017"/>
    </source>
</evidence>
<name>RECR_ECO27</name>
<proteinExistence type="inferred from homology"/>
<feature type="chain" id="PRO_1000195384" description="Recombination protein RecR">
    <location>
        <begin position="1"/>
        <end position="201"/>
    </location>
</feature>
<feature type="domain" description="Toprim" evidence="1">
    <location>
        <begin position="81"/>
        <end position="176"/>
    </location>
</feature>
<feature type="zinc finger region" description="C4-type" evidence="1">
    <location>
        <begin position="57"/>
        <end position="72"/>
    </location>
</feature>
<sequence length="201" mass="21963">MQTSPLLTQLMEALRCLPGVGPKSAQRMAFTLLQRDRSGGMRLAQALTRAMSEIGHCADCRTFTEQEVCNICSNPRRQENGQICVVESPADIYAIEQTGQFSGRYFVLMGHLSPLDGIGPDDIGLDRLEQRLAEEKITEVILATNPTVEGEATANYIAELCAQYDVEASRIAHGVPVGGELEMVDGTTLSHSLAGRHKIRF</sequence>
<comment type="function">
    <text evidence="1">May play a role in DNA repair. It seems to be involved in an RecBC-independent recombinational process of DNA repair. It may act with RecF and RecO.</text>
</comment>
<comment type="similarity">
    <text evidence="1">Belongs to the RecR family.</text>
</comment>
<gene>
    <name evidence="1" type="primary">recR</name>
    <name type="ordered locus">E2348C_0407</name>
</gene>